<comment type="catalytic activity">
    <reaction evidence="1">
        <text>thymidine + ATP = dTMP + ADP + H(+)</text>
        <dbReference type="Rhea" id="RHEA:19129"/>
        <dbReference type="ChEBI" id="CHEBI:15378"/>
        <dbReference type="ChEBI" id="CHEBI:17748"/>
        <dbReference type="ChEBI" id="CHEBI:30616"/>
        <dbReference type="ChEBI" id="CHEBI:63528"/>
        <dbReference type="ChEBI" id="CHEBI:456216"/>
        <dbReference type="EC" id="2.7.1.21"/>
    </reaction>
</comment>
<comment type="subunit">
    <text evidence="1">Homotetramer.</text>
</comment>
<comment type="subcellular location">
    <subcellularLocation>
        <location evidence="1">Cytoplasm</location>
    </subcellularLocation>
</comment>
<comment type="similarity">
    <text evidence="1">Belongs to the thymidine kinase family.</text>
</comment>
<evidence type="ECO:0000255" key="1">
    <source>
        <dbReference type="HAMAP-Rule" id="MF_00124"/>
    </source>
</evidence>
<accession>B5ZCA9</accession>
<reference key="1">
    <citation type="submission" date="2008-10" db="EMBL/GenBank/DDBJ databases">
        <title>Genome sequence of Ureaplasma urealyticum serovar 10 ATCC-33699.</title>
        <authorList>
            <person name="Shrivastava S."/>
            <person name="Methe B.A."/>
            <person name="Glass J."/>
            <person name="White K."/>
            <person name="Duffy L.B."/>
        </authorList>
    </citation>
    <scope>NUCLEOTIDE SEQUENCE [LARGE SCALE GENOMIC DNA]</scope>
    <source>
        <strain>ATCC 33699 / Western</strain>
    </source>
</reference>
<name>KITH_UREU1</name>
<organism>
    <name type="scientific">Ureaplasma urealyticum serovar 10 (strain ATCC 33699 / Western)</name>
    <dbReference type="NCBI Taxonomy" id="565575"/>
    <lineage>
        <taxon>Bacteria</taxon>
        <taxon>Bacillati</taxon>
        <taxon>Mycoplasmatota</taxon>
        <taxon>Mycoplasmoidales</taxon>
        <taxon>Mycoplasmoidaceae</taxon>
        <taxon>Ureaplasma</taxon>
    </lineage>
</organism>
<dbReference type="EC" id="2.7.1.21" evidence="1"/>
<dbReference type="EMBL" id="CP001184">
    <property type="protein sequence ID" value="ACI59923.1"/>
    <property type="molecule type" value="Genomic_DNA"/>
</dbReference>
<dbReference type="RefSeq" id="WP_004025969.1">
    <property type="nucleotide sequence ID" value="NC_011374.1"/>
</dbReference>
<dbReference type="SMR" id="B5ZCA9"/>
<dbReference type="STRING" id="565575.UUR10_0699"/>
<dbReference type="KEGG" id="uue:UUR10_0699"/>
<dbReference type="eggNOG" id="COG1435">
    <property type="taxonomic scope" value="Bacteria"/>
</dbReference>
<dbReference type="HOGENOM" id="CLU_064400_3_0_14"/>
<dbReference type="OrthoDB" id="9781579at2"/>
<dbReference type="Proteomes" id="UP000002018">
    <property type="component" value="Chromosome"/>
</dbReference>
<dbReference type="GO" id="GO:0005829">
    <property type="term" value="C:cytosol"/>
    <property type="evidence" value="ECO:0007669"/>
    <property type="project" value="TreeGrafter"/>
</dbReference>
<dbReference type="GO" id="GO:0005524">
    <property type="term" value="F:ATP binding"/>
    <property type="evidence" value="ECO:0007669"/>
    <property type="project" value="UniProtKB-UniRule"/>
</dbReference>
<dbReference type="GO" id="GO:0004797">
    <property type="term" value="F:thymidine kinase activity"/>
    <property type="evidence" value="ECO:0007669"/>
    <property type="project" value="UniProtKB-UniRule"/>
</dbReference>
<dbReference type="GO" id="GO:0008270">
    <property type="term" value="F:zinc ion binding"/>
    <property type="evidence" value="ECO:0007669"/>
    <property type="project" value="UniProtKB-UniRule"/>
</dbReference>
<dbReference type="GO" id="GO:0071897">
    <property type="term" value="P:DNA biosynthetic process"/>
    <property type="evidence" value="ECO:0007669"/>
    <property type="project" value="UniProtKB-KW"/>
</dbReference>
<dbReference type="GO" id="GO:0046104">
    <property type="term" value="P:thymidine metabolic process"/>
    <property type="evidence" value="ECO:0007669"/>
    <property type="project" value="TreeGrafter"/>
</dbReference>
<dbReference type="Gene3D" id="3.30.60.20">
    <property type="match status" value="1"/>
</dbReference>
<dbReference type="Gene3D" id="3.40.50.300">
    <property type="entry name" value="P-loop containing nucleotide triphosphate hydrolases"/>
    <property type="match status" value="1"/>
</dbReference>
<dbReference type="HAMAP" id="MF_00124">
    <property type="entry name" value="Thymidine_kinase"/>
    <property type="match status" value="1"/>
</dbReference>
<dbReference type="InterPro" id="IPR027417">
    <property type="entry name" value="P-loop_NTPase"/>
</dbReference>
<dbReference type="InterPro" id="IPR001267">
    <property type="entry name" value="Thymidine_kinase"/>
</dbReference>
<dbReference type="InterPro" id="IPR020633">
    <property type="entry name" value="Thymidine_kinase_CS"/>
</dbReference>
<dbReference type="NCBIfam" id="NF003296">
    <property type="entry name" value="PRK04296.1-1"/>
    <property type="match status" value="1"/>
</dbReference>
<dbReference type="PANTHER" id="PTHR11441">
    <property type="entry name" value="THYMIDINE KINASE"/>
    <property type="match status" value="1"/>
</dbReference>
<dbReference type="PANTHER" id="PTHR11441:SF0">
    <property type="entry name" value="THYMIDINE KINASE, CYTOSOLIC"/>
    <property type="match status" value="1"/>
</dbReference>
<dbReference type="Pfam" id="PF00265">
    <property type="entry name" value="TK"/>
    <property type="match status" value="1"/>
</dbReference>
<dbReference type="PIRSF" id="PIRSF035805">
    <property type="entry name" value="TK_cell"/>
    <property type="match status" value="1"/>
</dbReference>
<dbReference type="SUPFAM" id="SSF57716">
    <property type="entry name" value="Glucocorticoid receptor-like (DNA-binding domain)"/>
    <property type="match status" value="1"/>
</dbReference>
<dbReference type="SUPFAM" id="SSF52540">
    <property type="entry name" value="P-loop containing nucleoside triphosphate hydrolases"/>
    <property type="match status" value="1"/>
</dbReference>
<dbReference type="PROSITE" id="PS00603">
    <property type="entry name" value="TK_CELLULAR_TYPE"/>
    <property type="match status" value="1"/>
</dbReference>
<protein>
    <recommendedName>
        <fullName evidence="1">Thymidine kinase</fullName>
        <ecNumber evidence="1">2.7.1.21</ecNumber>
    </recommendedName>
</protein>
<gene>
    <name evidence="1" type="primary">tdk</name>
    <name type="ordered locus">UUR10_0699</name>
</gene>
<proteinExistence type="inferred from homology"/>
<sequence length="223" mass="25398">MAKAHAFSKKVGWIELITGPMFAGKTAELIRRLHRLEYADVKYLVFKPRIDTRSTQNIKSRTGTSLPSIEVENAPEILSYIMSDNFDNEIKVIGIDEVQFFDDRICEVANILAENGFVVIISGLDKNFKGEPFGPIAKLFAYADKITKLTAICNECGAEATHSLRKIDGKYANYDDEIVKIGCQEFYSAVCRHHHKVPNRPYLNANSEEFIRFFKNKKRNKNV</sequence>
<feature type="chain" id="PRO_1000095439" description="Thymidine kinase">
    <location>
        <begin position="1"/>
        <end position="223"/>
    </location>
</feature>
<feature type="active site" description="Proton acceptor" evidence="1">
    <location>
        <position position="97"/>
    </location>
</feature>
<feature type="binding site" evidence="1">
    <location>
        <begin position="19"/>
        <end position="26"/>
    </location>
    <ligand>
        <name>ATP</name>
        <dbReference type="ChEBI" id="CHEBI:30616"/>
    </ligand>
</feature>
<feature type="binding site" evidence="1">
    <location>
        <begin position="96"/>
        <end position="99"/>
    </location>
    <ligand>
        <name>ATP</name>
        <dbReference type="ChEBI" id="CHEBI:30616"/>
    </ligand>
</feature>
<feature type="binding site" evidence="1">
    <location>
        <position position="153"/>
    </location>
    <ligand>
        <name>Zn(2+)</name>
        <dbReference type="ChEBI" id="CHEBI:29105"/>
    </ligand>
</feature>
<feature type="binding site" evidence="1">
    <location>
        <position position="156"/>
    </location>
    <ligand>
        <name>Zn(2+)</name>
        <dbReference type="ChEBI" id="CHEBI:29105"/>
    </ligand>
</feature>
<feature type="binding site" evidence="1">
    <location>
        <position position="191"/>
    </location>
    <ligand>
        <name>Zn(2+)</name>
        <dbReference type="ChEBI" id="CHEBI:29105"/>
    </ligand>
</feature>
<feature type="binding site" evidence="1">
    <location>
        <position position="194"/>
    </location>
    <ligand>
        <name>Zn(2+)</name>
        <dbReference type="ChEBI" id="CHEBI:29105"/>
    </ligand>
</feature>
<keyword id="KW-0067">ATP-binding</keyword>
<keyword id="KW-0963">Cytoplasm</keyword>
<keyword id="KW-0237">DNA synthesis</keyword>
<keyword id="KW-0418">Kinase</keyword>
<keyword id="KW-0479">Metal-binding</keyword>
<keyword id="KW-0547">Nucleotide-binding</keyword>
<keyword id="KW-0808">Transferase</keyword>
<keyword id="KW-0862">Zinc</keyword>